<name>TYSY_STRTD</name>
<proteinExistence type="inferred from homology"/>
<reference key="1">
    <citation type="journal article" date="2006" name="Proc. Natl. Acad. Sci. U.S.A.">
        <title>Comparative genomics of the lactic acid bacteria.</title>
        <authorList>
            <person name="Makarova K.S."/>
            <person name="Slesarev A."/>
            <person name="Wolf Y.I."/>
            <person name="Sorokin A."/>
            <person name="Mirkin B."/>
            <person name="Koonin E.V."/>
            <person name="Pavlov A."/>
            <person name="Pavlova N."/>
            <person name="Karamychev V."/>
            <person name="Polouchine N."/>
            <person name="Shakhova V."/>
            <person name="Grigoriev I."/>
            <person name="Lou Y."/>
            <person name="Rohksar D."/>
            <person name="Lucas S."/>
            <person name="Huang K."/>
            <person name="Goodstein D.M."/>
            <person name="Hawkins T."/>
            <person name="Plengvidhya V."/>
            <person name="Welker D."/>
            <person name="Hughes J."/>
            <person name="Goh Y."/>
            <person name="Benson A."/>
            <person name="Baldwin K."/>
            <person name="Lee J.-H."/>
            <person name="Diaz-Muniz I."/>
            <person name="Dosti B."/>
            <person name="Smeianov V."/>
            <person name="Wechter W."/>
            <person name="Barabote R."/>
            <person name="Lorca G."/>
            <person name="Altermann E."/>
            <person name="Barrangou R."/>
            <person name="Ganesan B."/>
            <person name="Xie Y."/>
            <person name="Rawsthorne H."/>
            <person name="Tamir D."/>
            <person name="Parker C."/>
            <person name="Breidt F."/>
            <person name="Broadbent J.R."/>
            <person name="Hutkins R."/>
            <person name="O'Sullivan D."/>
            <person name="Steele J."/>
            <person name="Unlu G."/>
            <person name="Saier M.H. Jr."/>
            <person name="Klaenhammer T."/>
            <person name="Richardson P."/>
            <person name="Kozyavkin S."/>
            <person name="Weimer B.C."/>
            <person name="Mills D.A."/>
        </authorList>
    </citation>
    <scope>NUCLEOTIDE SEQUENCE [LARGE SCALE GENOMIC DNA]</scope>
    <source>
        <strain>ATCC BAA-491 / LMD-9</strain>
    </source>
</reference>
<gene>
    <name evidence="1" type="primary">thyA</name>
    <name type="ordered locus">STER_0622</name>
</gene>
<evidence type="ECO:0000255" key="1">
    <source>
        <dbReference type="HAMAP-Rule" id="MF_00008"/>
    </source>
</evidence>
<accession>Q03LN3</accession>
<keyword id="KW-0963">Cytoplasm</keyword>
<keyword id="KW-0489">Methyltransferase</keyword>
<keyword id="KW-0545">Nucleotide biosynthesis</keyword>
<keyword id="KW-0808">Transferase</keyword>
<feature type="chain" id="PRO_1000000697" description="Thymidylate synthase">
    <location>
        <begin position="1"/>
        <end position="286"/>
    </location>
</feature>
<feature type="active site" description="Nucleophile" evidence="1">
    <location>
        <position position="161"/>
    </location>
</feature>
<feature type="binding site" evidence="1">
    <location>
        <begin position="140"/>
        <end position="141"/>
    </location>
    <ligand>
        <name>dUMP</name>
        <dbReference type="ChEBI" id="CHEBI:246422"/>
        <note>ligand shared between dimeric partners</note>
    </ligand>
</feature>
<feature type="binding site" description="in other chain" evidence="1">
    <location>
        <begin position="185"/>
        <end position="188"/>
    </location>
    <ligand>
        <name>dUMP</name>
        <dbReference type="ChEBI" id="CHEBI:246422"/>
        <note>ligand shared between dimeric partners</note>
    </ligand>
</feature>
<feature type="binding site" evidence="1">
    <location>
        <position position="188"/>
    </location>
    <ligand>
        <name>(6R)-5,10-methylene-5,6,7,8-tetrahydrofolate</name>
        <dbReference type="ChEBI" id="CHEBI:15636"/>
    </ligand>
</feature>
<feature type="binding site" description="in other chain" evidence="1">
    <location>
        <position position="196"/>
    </location>
    <ligand>
        <name>dUMP</name>
        <dbReference type="ChEBI" id="CHEBI:246422"/>
        <note>ligand shared between dimeric partners</note>
    </ligand>
</feature>
<feature type="binding site" description="in other chain" evidence="1">
    <location>
        <begin position="226"/>
        <end position="228"/>
    </location>
    <ligand>
        <name>dUMP</name>
        <dbReference type="ChEBI" id="CHEBI:246422"/>
        <note>ligand shared between dimeric partners</note>
    </ligand>
</feature>
<feature type="binding site" evidence="1">
    <location>
        <position position="285"/>
    </location>
    <ligand>
        <name>(6R)-5,10-methylene-5,6,7,8-tetrahydrofolate</name>
        <dbReference type="ChEBI" id="CHEBI:15636"/>
    </ligand>
</feature>
<organism>
    <name type="scientific">Streptococcus thermophilus (strain ATCC BAA-491 / LMD-9)</name>
    <dbReference type="NCBI Taxonomy" id="322159"/>
    <lineage>
        <taxon>Bacteria</taxon>
        <taxon>Bacillati</taxon>
        <taxon>Bacillota</taxon>
        <taxon>Bacilli</taxon>
        <taxon>Lactobacillales</taxon>
        <taxon>Streptococcaceae</taxon>
        <taxon>Streptococcus</taxon>
    </lineage>
</organism>
<comment type="function">
    <text evidence="1">Catalyzes the reductive methylation of 2'-deoxyuridine-5'-monophosphate (dUMP) to 2'-deoxythymidine-5'-monophosphate (dTMP) while utilizing 5,10-methylenetetrahydrofolate (mTHF) as the methyl donor and reductant in the reaction, yielding dihydrofolate (DHF) as a by-product. This enzymatic reaction provides an intracellular de novo source of dTMP, an essential precursor for DNA biosynthesis.</text>
</comment>
<comment type="catalytic activity">
    <reaction evidence="1">
        <text>dUMP + (6R)-5,10-methylene-5,6,7,8-tetrahydrofolate = 7,8-dihydrofolate + dTMP</text>
        <dbReference type="Rhea" id="RHEA:12104"/>
        <dbReference type="ChEBI" id="CHEBI:15636"/>
        <dbReference type="ChEBI" id="CHEBI:57451"/>
        <dbReference type="ChEBI" id="CHEBI:63528"/>
        <dbReference type="ChEBI" id="CHEBI:246422"/>
        <dbReference type="EC" id="2.1.1.45"/>
    </reaction>
</comment>
<comment type="pathway">
    <text evidence="1">Pyrimidine metabolism; dTTP biosynthesis.</text>
</comment>
<comment type="subunit">
    <text evidence="1">Homodimer.</text>
</comment>
<comment type="subcellular location">
    <subcellularLocation>
        <location evidence="1">Cytoplasm</location>
    </subcellularLocation>
</comment>
<comment type="similarity">
    <text evidence="1">Belongs to the thymidylate synthase family. Bacterial-type ThyA subfamily.</text>
</comment>
<sequence>MTKADTIFKENITKIMEEGVWSEQARPKYKDGTTANSKYITGSFAEYDLSKGEFPITTLRPIAIKSAIKEVFWIYQDQTNSLDVLEDKYNVHYWNDWEVEGVPANNGDKRSIGQRYGAVVKKHDIINRLLAQLEANPWNRRNVISLWDYEAFEETAGLQPCAFQTMFDVRRVGEDVYLDATLTQRSNDMLVAHHINAMQYVALQMMIAKHFGWKVGKFFYFINNLHIYDNQFEQAEELLKRQPSDCQPRLVLNVPDETNFFDIKPEDFELVDYDPVKPQLKFDLAI</sequence>
<dbReference type="EC" id="2.1.1.45" evidence="1"/>
<dbReference type="EMBL" id="CP000419">
    <property type="protein sequence ID" value="ABJ65889.1"/>
    <property type="molecule type" value="Genomic_DNA"/>
</dbReference>
<dbReference type="RefSeq" id="WP_002950145.1">
    <property type="nucleotide sequence ID" value="NC_008532.1"/>
</dbReference>
<dbReference type="SMR" id="Q03LN3"/>
<dbReference type="KEGG" id="ste:STER_0622"/>
<dbReference type="HOGENOM" id="CLU_021669_0_0_9"/>
<dbReference type="UniPathway" id="UPA00575"/>
<dbReference type="GO" id="GO:0005829">
    <property type="term" value="C:cytosol"/>
    <property type="evidence" value="ECO:0007669"/>
    <property type="project" value="TreeGrafter"/>
</dbReference>
<dbReference type="GO" id="GO:0004799">
    <property type="term" value="F:thymidylate synthase activity"/>
    <property type="evidence" value="ECO:0007669"/>
    <property type="project" value="UniProtKB-UniRule"/>
</dbReference>
<dbReference type="GO" id="GO:0006231">
    <property type="term" value="P:dTMP biosynthetic process"/>
    <property type="evidence" value="ECO:0007669"/>
    <property type="project" value="UniProtKB-UniRule"/>
</dbReference>
<dbReference type="GO" id="GO:0006235">
    <property type="term" value="P:dTTP biosynthetic process"/>
    <property type="evidence" value="ECO:0007669"/>
    <property type="project" value="UniProtKB-UniRule"/>
</dbReference>
<dbReference type="GO" id="GO:0032259">
    <property type="term" value="P:methylation"/>
    <property type="evidence" value="ECO:0007669"/>
    <property type="project" value="UniProtKB-KW"/>
</dbReference>
<dbReference type="CDD" id="cd00351">
    <property type="entry name" value="TS_Pyrimidine_HMase"/>
    <property type="match status" value="1"/>
</dbReference>
<dbReference type="Gene3D" id="3.30.572.10">
    <property type="entry name" value="Thymidylate synthase/dCMP hydroxymethylase domain"/>
    <property type="match status" value="1"/>
</dbReference>
<dbReference type="HAMAP" id="MF_00008">
    <property type="entry name" value="Thymidy_synth_bact"/>
    <property type="match status" value="1"/>
</dbReference>
<dbReference type="InterPro" id="IPR045097">
    <property type="entry name" value="Thymidate_synth/dCMP_Mease"/>
</dbReference>
<dbReference type="InterPro" id="IPR023451">
    <property type="entry name" value="Thymidate_synth/dCMP_Mease_dom"/>
</dbReference>
<dbReference type="InterPro" id="IPR036926">
    <property type="entry name" value="Thymidate_synth/dCMP_Mease_sf"/>
</dbReference>
<dbReference type="InterPro" id="IPR000398">
    <property type="entry name" value="Thymidylate_synthase"/>
</dbReference>
<dbReference type="InterPro" id="IPR020940">
    <property type="entry name" value="Thymidylate_synthase_AS"/>
</dbReference>
<dbReference type="NCBIfam" id="NF002495">
    <property type="entry name" value="PRK01827.1-1"/>
    <property type="match status" value="1"/>
</dbReference>
<dbReference type="PANTHER" id="PTHR11548">
    <property type="entry name" value="THYMIDYLATE SYNTHASE 1"/>
    <property type="match status" value="1"/>
</dbReference>
<dbReference type="PANTHER" id="PTHR11548:SF1">
    <property type="entry name" value="THYMIDYLATE SYNTHASE 1"/>
    <property type="match status" value="1"/>
</dbReference>
<dbReference type="Pfam" id="PF00303">
    <property type="entry name" value="Thymidylat_synt"/>
    <property type="match status" value="1"/>
</dbReference>
<dbReference type="PRINTS" id="PR00108">
    <property type="entry name" value="THYMDSNTHASE"/>
</dbReference>
<dbReference type="SUPFAM" id="SSF55831">
    <property type="entry name" value="Thymidylate synthase/dCMP hydroxymethylase"/>
    <property type="match status" value="1"/>
</dbReference>
<dbReference type="PROSITE" id="PS00091">
    <property type="entry name" value="THYMIDYLATE_SYNTHASE"/>
    <property type="match status" value="1"/>
</dbReference>
<protein>
    <recommendedName>
        <fullName evidence="1">Thymidylate synthase</fullName>
        <shortName evidence="1">TS</shortName>
        <shortName evidence="1">TSase</shortName>
        <ecNumber evidence="1">2.1.1.45</ecNumber>
    </recommendedName>
</protein>